<protein>
    <recommendedName>
        <fullName>1095.6 Da venom vasodilator peptide</fullName>
    </recommendedName>
</protein>
<comment type="function">
    <text evidence="1">Toxin. Induces vasodilation in mice and rabbits.</text>
</comment>
<comment type="subcellular location">
    <subcellularLocation>
        <location evidence="1">Secreted</location>
    </subcellularLocation>
</comment>
<comment type="tissue specificity">
    <text evidence="1">Expressed by the venom gland.</text>
</comment>
<comment type="mass spectrometry"/>
<sequence>PPPPPGPPPNP</sequence>
<accession>P84745</accession>
<keyword id="KW-0903">Direct protein sequencing</keyword>
<keyword id="KW-0379">Hydroxylation</keyword>
<keyword id="KW-0964">Secreted</keyword>
<keyword id="KW-0800">Toxin</keyword>
<name>VVP2_BOTJR</name>
<organism>
    <name type="scientific">Bothrops jararacussu</name>
    <name type="common">Jararacussu</name>
    <dbReference type="NCBI Taxonomy" id="8726"/>
    <lineage>
        <taxon>Eukaryota</taxon>
        <taxon>Metazoa</taxon>
        <taxon>Chordata</taxon>
        <taxon>Craniata</taxon>
        <taxon>Vertebrata</taxon>
        <taxon>Euteleostomi</taxon>
        <taxon>Lepidosauria</taxon>
        <taxon>Squamata</taxon>
        <taxon>Bifurcata</taxon>
        <taxon>Unidentata</taxon>
        <taxon>Episquamata</taxon>
        <taxon>Toxicofera</taxon>
        <taxon>Serpentes</taxon>
        <taxon>Colubroidea</taxon>
        <taxon>Viperidae</taxon>
        <taxon>Crotalinae</taxon>
        <taxon>Bothrops</taxon>
    </lineage>
</organism>
<proteinExistence type="evidence at protein level"/>
<feature type="peptide" id="PRO_0000045326" description="1095.6 Da venom vasodilator peptide">
    <location>
        <begin position="1"/>
        <end position="11"/>
    </location>
</feature>
<feature type="modified residue" description="Hydroxyproline" evidence="1">
    <location>
        <position position="3"/>
    </location>
</feature>
<feature type="modified residue" description="Hydroxyproline" evidence="1">
    <location>
        <position position="9"/>
    </location>
</feature>
<reference evidence="2" key="1">
    <citation type="submission" date="2005-11" db="UniProtKB">
        <authorList>
            <person name="Guedes H.L.M."/>
            <person name="Correa-Neto C."/>
            <person name="De Simone S.G."/>
        </authorList>
    </citation>
    <scope>PROTEIN SEQUENCE</scope>
    <scope>FUNCTION</scope>
    <scope>SUBCELLULAR LOCATION</scope>
    <scope>TISSUE SPECIFICITY</scope>
    <scope>MASS SPECTROMETRY</scope>
    <scope>HYDROXYLATION AT PRO-3 AND PRO-9</scope>
    <source>
        <tissue>Venom</tissue>
    </source>
</reference>
<evidence type="ECO:0000269" key="1">
    <source ref="1"/>
</evidence>
<evidence type="ECO:0000305" key="2"/>
<dbReference type="GO" id="GO:0005576">
    <property type="term" value="C:extracellular region"/>
    <property type="evidence" value="ECO:0007669"/>
    <property type="project" value="UniProtKB-SubCell"/>
</dbReference>
<dbReference type="GO" id="GO:0090729">
    <property type="term" value="F:toxin activity"/>
    <property type="evidence" value="ECO:0007669"/>
    <property type="project" value="UniProtKB-KW"/>
</dbReference>